<keyword id="KW-0004">4Fe-4S</keyword>
<keyword id="KW-0963">Cytoplasm</keyword>
<keyword id="KW-0408">Iron</keyword>
<keyword id="KW-0411">Iron-sulfur</keyword>
<keyword id="KW-0479">Metal-binding</keyword>
<keyword id="KW-0949">S-adenosyl-L-methionine</keyword>
<keyword id="KW-0808">Transferase</keyword>
<name>LIPA_CERS5</name>
<accession>A4WRC8</accession>
<evidence type="ECO:0000255" key="1">
    <source>
        <dbReference type="HAMAP-Rule" id="MF_00206"/>
    </source>
</evidence>
<evidence type="ECO:0000255" key="2">
    <source>
        <dbReference type="PROSITE-ProRule" id="PRU01266"/>
    </source>
</evidence>
<evidence type="ECO:0000256" key="3">
    <source>
        <dbReference type="SAM" id="MobiDB-lite"/>
    </source>
</evidence>
<proteinExistence type="inferred from homology"/>
<feature type="chain" id="PRO_0000325302" description="Lipoyl synthase">
    <location>
        <begin position="1"/>
        <end position="320"/>
    </location>
</feature>
<feature type="domain" description="Radical SAM core" evidence="2">
    <location>
        <begin position="71"/>
        <end position="289"/>
    </location>
</feature>
<feature type="region of interest" description="Disordered" evidence="3">
    <location>
        <begin position="1"/>
        <end position="32"/>
    </location>
</feature>
<feature type="compositionally biased region" description="Basic and acidic residues" evidence="3">
    <location>
        <begin position="1"/>
        <end position="29"/>
    </location>
</feature>
<feature type="binding site" evidence="1">
    <location>
        <position position="60"/>
    </location>
    <ligand>
        <name>[4Fe-4S] cluster</name>
        <dbReference type="ChEBI" id="CHEBI:49883"/>
        <label>1</label>
    </ligand>
</feature>
<feature type="binding site" evidence="1">
    <location>
        <position position="65"/>
    </location>
    <ligand>
        <name>[4Fe-4S] cluster</name>
        <dbReference type="ChEBI" id="CHEBI:49883"/>
        <label>1</label>
    </ligand>
</feature>
<feature type="binding site" evidence="1">
    <location>
        <position position="71"/>
    </location>
    <ligand>
        <name>[4Fe-4S] cluster</name>
        <dbReference type="ChEBI" id="CHEBI:49883"/>
        <label>1</label>
    </ligand>
</feature>
<feature type="binding site" evidence="1">
    <location>
        <position position="86"/>
    </location>
    <ligand>
        <name>[4Fe-4S] cluster</name>
        <dbReference type="ChEBI" id="CHEBI:49883"/>
        <label>2</label>
        <note>4Fe-4S-S-AdoMet</note>
    </ligand>
</feature>
<feature type="binding site" evidence="1">
    <location>
        <position position="90"/>
    </location>
    <ligand>
        <name>[4Fe-4S] cluster</name>
        <dbReference type="ChEBI" id="CHEBI:49883"/>
        <label>2</label>
        <note>4Fe-4S-S-AdoMet</note>
    </ligand>
</feature>
<feature type="binding site" evidence="1">
    <location>
        <position position="93"/>
    </location>
    <ligand>
        <name>[4Fe-4S] cluster</name>
        <dbReference type="ChEBI" id="CHEBI:49883"/>
        <label>2</label>
        <note>4Fe-4S-S-AdoMet</note>
    </ligand>
</feature>
<feature type="binding site" evidence="1">
    <location>
        <position position="300"/>
    </location>
    <ligand>
        <name>[4Fe-4S] cluster</name>
        <dbReference type="ChEBI" id="CHEBI:49883"/>
        <label>1</label>
    </ligand>
</feature>
<sequence>MIGKLVRDLKIPDQRHPEKAHRPDNDQPRKPSWIRVKAPTSEGYKETRDIIRGQKLATVCEEAGCPNVGECWGQGHATMMIMGEICTRGCTFCNVATGKPQALDAFEPGRVAHAVSQLGLKHVVVTSVDRDDLEDGGAEHFAQTIRAIRHRAQGTTVEVLVPDFLKCGPEALETVVAARPDVFNHNLETVPGLYPEVRPGARYFHSLRLLQRAKELDPQIFTKSGIMVGLGEDRQGVMQVMDDMRAAGVDFLTIGQYLQPTPKHHRVDRFVTPEEFASYEKAAYGKGFLMVSATPLTRSSYHAGEDFARLRAARLERLGA</sequence>
<gene>
    <name evidence="1" type="primary">lipA</name>
    <name type="ordered locus">Rsph17025_1041</name>
</gene>
<organism>
    <name type="scientific">Cereibacter sphaeroides (strain ATCC 17025 / ATH 2.4.3)</name>
    <name type="common">Rhodobacter sphaeroides</name>
    <dbReference type="NCBI Taxonomy" id="349102"/>
    <lineage>
        <taxon>Bacteria</taxon>
        <taxon>Pseudomonadati</taxon>
        <taxon>Pseudomonadota</taxon>
        <taxon>Alphaproteobacteria</taxon>
        <taxon>Rhodobacterales</taxon>
        <taxon>Paracoccaceae</taxon>
        <taxon>Cereibacter</taxon>
    </lineage>
</organism>
<dbReference type="EC" id="2.8.1.8" evidence="1"/>
<dbReference type="EMBL" id="CP000661">
    <property type="protein sequence ID" value="ABP69942.1"/>
    <property type="molecule type" value="Genomic_DNA"/>
</dbReference>
<dbReference type="SMR" id="A4WRC8"/>
<dbReference type="STRING" id="349102.Rsph17025_1041"/>
<dbReference type="KEGG" id="rsq:Rsph17025_1041"/>
<dbReference type="eggNOG" id="COG0320">
    <property type="taxonomic scope" value="Bacteria"/>
</dbReference>
<dbReference type="HOGENOM" id="CLU_033144_2_1_5"/>
<dbReference type="BioCyc" id="RSPH349102:G1G8M-1066-MONOMER"/>
<dbReference type="UniPathway" id="UPA00538">
    <property type="reaction ID" value="UER00593"/>
</dbReference>
<dbReference type="GO" id="GO:0005737">
    <property type="term" value="C:cytoplasm"/>
    <property type="evidence" value="ECO:0007669"/>
    <property type="project" value="UniProtKB-SubCell"/>
</dbReference>
<dbReference type="GO" id="GO:0051539">
    <property type="term" value="F:4 iron, 4 sulfur cluster binding"/>
    <property type="evidence" value="ECO:0007669"/>
    <property type="project" value="UniProtKB-UniRule"/>
</dbReference>
<dbReference type="GO" id="GO:0016992">
    <property type="term" value="F:lipoate synthase activity"/>
    <property type="evidence" value="ECO:0007669"/>
    <property type="project" value="UniProtKB-UniRule"/>
</dbReference>
<dbReference type="GO" id="GO:0046872">
    <property type="term" value="F:metal ion binding"/>
    <property type="evidence" value="ECO:0007669"/>
    <property type="project" value="UniProtKB-KW"/>
</dbReference>
<dbReference type="CDD" id="cd01335">
    <property type="entry name" value="Radical_SAM"/>
    <property type="match status" value="1"/>
</dbReference>
<dbReference type="FunFam" id="3.20.20.70:FF:000040">
    <property type="entry name" value="Lipoyl synthase"/>
    <property type="match status" value="1"/>
</dbReference>
<dbReference type="Gene3D" id="3.20.20.70">
    <property type="entry name" value="Aldolase class I"/>
    <property type="match status" value="1"/>
</dbReference>
<dbReference type="HAMAP" id="MF_00206">
    <property type="entry name" value="Lipoyl_synth"/>
    <property type="match status" value="1"/>
</dbReference>
<dbReference type="InterPro" id="IPR013785">
    <property type="entry name" value="Aldolase_TIM"/>
</dbReference>
<dbReference type="InterPro" id="IPR006638">
    <property type="entry name" value="Elp3/MiaA/NifB-like_rSAM"/>
</dbReference>
<dbReference type="InterPro" id="IPR031691">
    <property type="entry name" value="LIAS_N"/>
</dbReference>
<dbReference type="InterPro" id="IPR003698">
    <property type="entry name" value="Lipoyl_synth"/>
</dbReference>
<dbReference type="InterPro" id="IPR007197">
    <property type="entry name" value="rSAM"/>
</dbReference>
<dbReference type="NCBIfam" id="TIGR00510">
    <property type="entry name" value="lipA"/>
    <property type="match status" value="1"/>
</dbReference>
<dbReference type="NCBIfam" id="NF004019">
    <property type="entry name" value="PRK05481.1"/>
    <property type="match status" value="1"/>
</dbReference>
<dbReference type="NCBIfam" id="NF009544">
    <property type="entry name" value="PRK12928.1"/>
    <property type="match status" value="1"/>
</dbReference>
<dbReference type="PANTHER" id="PTHR10949">
    <property type="entry name" value="LIPOYL SYNTHASE"/>
    <property type="match status" value="1"/>
</dbReference>
<dbReference type="PANTHER" id="PTHR10949:SF0">
    <property type="entry name" value="LIPOYL SYNTHASE, MITOCHONDRIAL"/>
    <property type="match status" value="1"/>
</dbReference>
<dbReference type="Pfam" id="PF16881">
    <property type="entry name" value="LIAS_N"/>
    <property type="match status" value="1"/>
</dbReference>
<dbReference type="Pfam" id="PF04055">
    <property type="entry name" value="Radical_SAM"/>
    <property type="match status" value="1"/>
</dbReference>
<dbReference type="PIRSF" id="PIRSF005963">
    <property type="entry name" value="Lipoyl_synth"/>
    <property type="match status" value="1"/>
</dbReference>
<dbReference type="SFLD" id="SFLDF00271">
    <property type="entry name" value="lipoyl_synthase"/>
    <property type="match status" value="1"/>
</dbReference>
<dbReference type="SFLD" id="SFLDG01058">
    <property type="entry name" value="lipoyl_synthase_like"/>
    <property type="match status" value="1"/>
</dbReference>
<dbReference type="SMART" id="SM00729">
    <property type="entry name" value="Elp3"/>
    <property type="match status" value="1"/>
</dbReference>
<dbReference type="SUPFAM" id="SSF102114">
    <property type="entry name" value="Radical SAM enzymes"/>
    <property type="match status" value="1"/>
</dbReference>
<dbReference type="PROSITE" id="PS51918">
    <property type="entry name" value="RADICAL_SAM"/>
    <property type="match status" value="1"/>
</dbReference>
<protein>
    <recommendedName>
        <fullName evidence="1">Lipoyl synthase</fullName>
        <ecNumber evidence="1">2.8.1.8</ecNumber>
    </recommendedName>
    <alternativeName>
        <fullName evidence="1">Lip-syn</fullName>
        <shortName evidence="1">LS</shortName>
    </alternativeName>
    <alternativeName>
        <fullName evidence="1">Lipoate synthase</fullName>
    </alternativeName>
    <alternativeName>
        <fullName evidence="1">Lipoic acid synthase</fullName>
    </alternativeName>
    <alternativeName>
        <fullName evidence="1">Sulfur insertion protein LipA</fullName>
    </alternativeName>
</protein>
<comment type="function">
    <text evidence="1">Catalyzes the radical-mediated insertion of two sulfur atoms into the C-6 and C-8 positions of the octanoyl moiety bound to the lipoyl domains of lipoate-dependent enzymes, thereby converting the octanoylated domains into lipoylated derivatives.</text>
</comment>
<comment type="catalytic activity">
    <reaction evidence="1">
        <text>[[Fe-S] cluster scaffold protein carrying a second [4Fe-4S](2+) cluster] + N(6)-octanoyl-L-lysyl-[protein] + 2 oxidized [2Fe-2S]-[ferredoxin] + 2 S-adenosyl-L-methionine + 4 H(+) = [[Fe-S] cluster scaffold protein] + N(6)-[(R)-dihydrolipoyl]-L-lysyl-[protein] + 4 Fe(3+) + 2 hydrogen sulfide + 2 5'-deoxyadenosine + 2 L-methionine + 2 reduced [2Fe-2S]-[ferredoxin]</text>
        <dbReference type="Rhea" id="RHEA:16585"/>
        <dbReference type="Rhea" id="RHEA-COMP:9928"/>
        <dbReference type="Rhea" id="RHEA-COMP:10000"/>
        <dbReference type="Rhea" id="RHEA-COMP:10001"/>
        <dbReference type="Rhea" id="RHEA-COMP:10475"/>
        <dbReference type="Rhea" id="RHEA-COMP:14568"/>
        <dbReference type="Rhea" id="RHEA-COMP:14569"/>
        <dbReference type="ChEBI" id="CHEBI:15378"/>
        <dbReference type="ChEBI" id="CHEBI:17319"/>
        <dbReference type="ChEBI" id="CHEBI:29034"/>
        <dbReference type="ChEBI" id="CHEBI:29919"/>
        <dbReference type="ChEBI" id="CHEBI:33722"/>
        <dbReference type="ChEBI" id="CHEBI:33737"/>
        <dbReference type="ChEBI" id="CHEBI:33738"/>
        <dbReference type="ChEBI" id="CHEBI:57844"/>
        <dbReference type="ChEBI" id="CHEBI:59789"/>
        <dbReference type="ChEBI" id="CHEBI:78809"/>
        <dbReference type="ChEBI" id="CHEBI:83100"/>
        <dbReference type="EC" id="2.8.1.8"/>
    </reaction>
</comment>
<comment type="cofactor">
    <cofactor evidence="1">
        <name>[4Fe-4S] cluster</name>
        <dbReference type="ChEBI" id="CHEBI:49883"/>
    </cofactor>
    <text evidence="1">Binds 2 [4Fe-4S] clusters per subunit. One cluster is coordinated with 3 cysteines and an exchangeable S-adenosyl-L-methionine.</text>
</comment>
<comment type="pathway">
    <text evidence="1">Protein modification; protein lipoylation via endogenous pathway; protein N(6)-(lipoyl)lysine from octanoyl-[acyl-carrier-protein]: step 2/2.</text>
</comment>
<comment type="subcellular location">
    <subcellularLocation>
        <location evidence="1">Cytoplasm</location>
    </subcellularLocation>
</comment>
<comment type="similarity">
    <text evidence="1">Belongs to the radical SAM superfamily. Lipoyl synthase family.</text>
</comment>
<reference key="1">
    <citation type="submission" date="2007-04" db="EMBL/GenBank/DDBJ databases">
        <title>Complete sequence of chromosome of Rhodobacter sphaeroides ATCC 17025.</title>
        <authorList>
            <consortium name="US DOE Joint Genome Institute"/>
            <person name="Copeland A."/>
            <person name="Lucas S."/>
            <person name="Lapidus A."/>
            <person name="Barry K."/>
            <person name="Detter J.C."/>
            <person name="Glavina del Rio T."/>
            <person name="Hammon N."/>
            <person name="Israni S."/>
            <person name="Dalin E."/>
            <person name="Tice H."/>
            <person name="Pitluck S."/>
            <person name="Chertkov O."/>
            <person name="Brettin T."/>
            <person name="Bruce D."/>
            <person name="Han C."/>
            <person name="Schmutz J."/>
            <person name="Larimer F."/>
            <person name="Land M."/>
            <person name="Hauser L."/>
            <person name="Kyrpides N."/>
            <person name="Kim E."/>
            <person name="Richardson P."/>
            <person name="Mackenzie C."/>
            <person name="Choudhary M."/>
            <person name="Donohue T.J."/>
            <person name="Kaplan S."/>
        </authorList>
    </citation>
    <scope>NUCLEOTIDE SEQUENCE [LARGE SCALE GENOMIC DNA]</scope>
    <source>
        <strain>ATCC 17025 / ATH 2.4.3</strain>
    </source>
</reference>